<dbReference type="EMBL" id="AE017126">
    <property type="protein sequence ID" value="AAP99398.1"/>
    <property type="molecule type" value="Genomic_DNA"/>
</dbReference>
<dbReference type="RefSeq" id="NP_874746.1">
    <property type="nucleotide sequence ID" value="NC_005042.1"/>
</dbReference>
<dbReference type="RefSeq" id="WP_011124507.1">
    <property type="nucleotide sequence ID" value="NC_005042.1"/>
</dbReference>
<dbReference type="SMR" id="Q7VDM4"/>
<dbReference type="STRING" id="167539.Pro_0352"/>
<dbReference type="EnsemblBacteria" id="AAP99398">
    <property type="protein sequence ID" value="AAP99398"/>
    <property type="gene ID" value="Pro_0352"/>
</dbReference>
<dbReference type="KEGG" id="pma:Pro_0352"/>
<dbReference type="PATRIC" id="fig|167539.5.peg.361"/>
<dbReference type="eggNOG" id="COG1327">
    <property type="taxonomic scope" value="Bacteria"/>
</dbReference>
<dbReference type="HOGENOM" id="CLU_108412_0_0_3"/>
<dbReference type="OrthoDB" id="9807461at2"/>
<dbReference type="Proteomes" id="UP000001420">
    <property type="component" value="Chromosome"/>
</dbReference>
<dbReference type="GO" id="GO:0005524">
    <property type="term" value="F:ATP binding"/>
    <property type="evidence" value="ECO:0007669"/>
    <property type="project" value="UniProtKB-KW"/>
</dbReference>
<dbReference type="GO" id="GO:0003677">
    <property type="term" value="F:DNA binding"/>
    <property type="evidence" value="ECO:0007669"/>
    <property type="project" value="UniProtKB-KW"/>
</dbReference>
<dbReference type="GO" id="GO:0008270">
    <property type="term" value="F:zinc ion binding"/>
    <property type="evidence" value="ECO:0007669"/>
    <property type="project" value="UniProtKB-UniRule"/>
</dbReference>
<dbReference type="GO" id="GO:0045892">
    <property type="term" value="P:negative regulation of DNA-templated transcription"/>
    <property type="evidence" value="ECO:0007669"/>
    <property type="project" value="UniProtKB-UniRule"/>
</dbReference>
<dbReference type="HAMAP" id="MF_00440">
    <property type="entry name" value="NrdR"/>
    <property type="match status" value="1"/>
</dbReference>
<dbReference type="InterPro" id="IPR005144">
    <property type="entry name" value="ATP-cone_dom"/>
</dbReference>
<dbReference type="InterPro" id="IPR055173">
    <property type="entry name" value="NrdR-like_N"/>
</dbReference>
<dbReference type="InterPro" id="IPR003796">
    <property type="entry name" value="RNR_NrdR-like"/>
</dbReference>
<dbReference type="NCBIfam" id="TIGR00244">
    <property type="entry name" value="transcriptional regulator NrdR"/>
    <property type="match status" value="1"/>
</dbReference>
<dbReference type="PANTHER" id="PTHR30455">
    <property type="entry name" value="TRANSCRIPTIONAL REPRESSOR NRDR"/>
    <property type="match status" value="1"/>
</dbReference>
<dbReference type="PANTHER" id="PTHR30455:SF2">
    <property type="entry name" value="TRANSCRIPTIONAL REPRESSOR NRDR"/>
    <property type="match status" value="1"/>
</dbReference>
<dbReference type="Pfam" id="PF03477">
    <property type="entry name" value="ATP-cone"/>
    <property type="match status" value="1"/>
</dbReference>
<dbReference type="Pfam" id="PF22811">
    <property type="entry name" value="Zn_ribbon_NrdR"/>
    <property type="match status" value="1"/>
</dbReference>
<dbReference type="PROSITE" id="PS51161">
    <property type="entry name" value="ATP_CONE"/>
    <property type="match status" value="1"/>
</dbReference>
<name>NRDR_PROMA</name>
<keyword id="KW-0067">ATP-binding</keyword>
<keyword id="KW-0238">DNA-binding</keyword>
<keyword id="KW-0479">Metal-binding</keyword>
<keyword id="KW-0547">Nucleotide-binding</keyword>
<keyword id="KW-1185">Reference proteome</keyword>
<keyword id="KW-0678">Repressor</keyword>
<keyword id="KW-0804">Transcription</keyword>
<keyword id="KW-0805">Transcription regulation</keyword>
<keyword id="KW-0862">Zinc</keyword>
<keyword id="KW-0863">Zinc-finger</keyword>
<feature type="chain" id="PRO_0000182330" description="Transcriptional repressor NrdR">
    <location>
        <begin position="1"/>
        <end position="157"/>
    </location>
</feature>
<feature type="domain" description="ATP-cone" evidence="1">
    <location>
        <begin position="49"/>
        <end position="139"/>
    </location>
</feature>
<feature type="zinc finger region" evidence="1">
    <location>
        <begin position="3"/>
        <end position="34"/>
    </location>
</feature>
<evidence type="ECO:0000255" key="1">
    <source>
        <dbReference type="HAMAP-Rule" id="MF_00440"/>
    </source>
</evidence>
<gene>
    <name evidence="1" type="primary">nrdR</name>
    <name type="ordered locus">Pro_0352</name>
</gene>
<reference key="1">
    <citation type="journal article" date="2003" name="Proc. Natl. Acad. Sci. U.S.A.">
        <title>Genome sequence of the cyanobacterium Prochlorococcus marinus SS120, a nearly minimal oxyphototrophic genome.</title>
        <authorList>
            <person name="Dufresne A."/>
            <person name="Salanoubat M."/>
            <person name="Partensky F."/>
            <person name="Artiguenave F."/>
            <person name="Axmann I.M."/>
            <person name="Barbe V."/>
            <person name="Duprat S."/>
            <person name="Galperin M.Y."/>
            <person name="Koonin E.V."/>
            <person name="Le Gall F."/>
            <person name="Makarova K.S."/>
            <person name="Ostrowski M."/>
            <person name="Oztas S."/>
            <person name="Robert C."/>
            <person name="Rogozin I.B."/>
            <person name="Scanlan D.J."/>
            <person name="Tandeau de Marsac N."/>
            <person name="Weissenbach J."/>
            <person name="Wincker P."/>
            <person name="Wolf Y.I."/>
            <person name="Hess W.R."/>
        </authorList>
    </citation>
    <scope>NUCLEOTIDE SEQUENCE [LARGE SCALE GENOMIC DNA]</scope>
    <source>
        <strain>SARG / CCMP1375 / SS120</strain>
    </source>
</reference>
<comment type="function">
    <text evidence="1">Negatively regulates transcription of bacterial ribonucleotide reductase nrd genes and operons by binding to NrdR-boxes.</text>
</comment>
<comment type="cofactor">
    <cofactor evidence="1">
        <name>Zn(2+)</name>
        <dbReference type="ChEBI" id="CHEBI:29105"/>
    </cofactor>
    <text evidence="1">Binds 1 zinc ion.</text>
</comment>
<comment type="similarity">
    <text evidence="1">Belongs to the NrdR family.</text>
</comment>
<organism>
    <name type="scientific">Prochlorococcus marinus (strain SARG / CCMP1375 / SS120)</name>
    <dbReference type="NCBI Taxonomy" id="167539"/>
    <lineage>
        <taxon>Bacteria</taxon>
        <taxon>Bacillati</taxon>
        <taxon>Cyanobacteriota</taxon>
        <taxon>Cyanophyceae</taxon>
        <taxon>Synechococcales</taxon>
        <taxon>Prochlorococcaceae</taxon>
        <taxon>Prochlorococcus</taxon>
    </lineage>
</organism>
<protein>
    <recommendedName>
        <fullName evidence="1">Transcriptional repressor NrdR</fullName>
    </recommendedName>
</protein>
<sequence>MQCPSCQNTDSRVLESRSADAGKCVRRRRECLNCDFRFTTYERVETIPVTVIKRSNAKEIFCRSKLLNGLTRACEKTSINNQKIEAIVDEIETHLQQSNLKEISSVDLGEMILLHLKSVNEVAYIRFASVYRQFNGIEDFIDTLESFKPSNKFAAIS</sequence>
<proteinExistence type="inferred from homology"/>
<accession>Q7VDM4</accession>